<keyword id="KW-0011">Acute phase</keyword>
<keyword id="KW-0044">Antibiotic</keyword>
<keyword id="KW-0929">Antimicrobial</keyword>
<keyword id="KW-0049">Antioxidant</keyword>
<keyword id="KW-1015">Disulfide bond</keyword>
<keyword id="KW-0325">Glycoprotein</keyword>
<keyword id="KW-0351">Hemoglobin-binding</keyword>
<keyword id="KW-0391">Immunity</keyword>
<keyword id="KW-1185">Reference proteome</keyword>
<keyword id="KW-0964">Secreted</keyword>
<keyword id="KW-0721">Serine protease homolog</keyword>
<keyword id="KW-0732">Signal</keyword>
<keyword id="KW-0768">Sushi</keyword>
<sequence length="346" mass="38602">MRALGAVVTLLLWGQLFAVDLSNDAMDTADDSCPKPPEIENGYVEHLVRYRCQHYRLRTEGDGVYTLNSEKQWVNTAAGERLPECEAVCGKPKHPVDQVQRIIGGSLDAKGSFPWQAKMVSRHELITGATLISDQWLLTTAKNLFLNHSEDATSKDIAPTLKLYVGKMQPVEIEKVVIHPNRSVVDIGVIKLRQKVPVNERVMPICLPSKDYIAPGRMGYVSGWGRNANFRFTDRLKYVMLPVADQDSCMLHYEGSTVPEKEGSKSSVGVQPILNEHTFCAGMTKYQEDTCYGDAGSAFAIHDLEQDTWYAAGILSFDKSCSVAEYGVYVKVNSFLDWIQETMAKN</sequence>
<proteinExistence type="evidence at transcript level"/>
<comment type="function">
    <text evidence="1">As a result of hemolysis, hemoglobin is found to accumulate in the kidney and is secreted in the urine. Haptoglobin captures, and combines with free plasma hemoglobin to allow hepatic recycling of heme iron and to prevent kidney damage. Haptoglobin also acts as an antioxidant, has antibacterial activity and plays a role in modulating many aspects of the acute phase response. Hemoglobin/haptoglobin complexes are rapidly cleared by the macrophage CD163 scavenger receptor expressed on the surface of liver Kupfer cells through an endocytic lysosomal degradation pathway (By similarity).</text>
</comment>
<comment type="subunit">
    <text evidence="2 3">Tetramer of two alpha and two beta chains; disulfide-linked (By similarity). The hemoglobin/haptoglobin complex is composed of a haptoglobin dimer bound to two hemoglobin alpha-beta dimers (By similarity). Interacts with CD163 (By similarity). Interacts with ERGIC3 (By similarity).</text>
</comment>
<comment type="subcellular location">
    <subcellularLocation>
        <location evidence="1">Secreted</location>
    </subcellularLocation>
</comment>
<comment type="tissue specificity">
    <text>Expressed by the liver and secreted in plasma.</text>
</comment>
<comment type="domain">
    <text evidence="1">The beta chain mediates most of the interactions with both subunits of hemoglobin, while the alpha chain forms the homodimeric interface.</text>
</comment>
<comment type="similarity">
    <text evidence="5">Belongs to the peptidase S1 family.</text>
</comment>
<comment type="caution">
    <text evidence="7">Although homologous to serine proteases, it has lost all essential catalytic residues and has no enzymatic activity.</text>
</comment>
<accession>O35086</accession>
<gene>
    <name type="primary">HP</name>
</gene>
<feature type="signal peptide" evidence="4">
    <location>
        <begin position="1"/>
        <end position="18"/>
    </location>
</feature>
<feature type="chain" id="PRO_0000028459" description="Haptoglobin">
    <location>
        <begin position="19"/>
        <end position="346"/>
    </location>
</feature>
<feature type="chain" id="PRO_0000028460" description="Haptoglobin alpha chain">
    <location>
        <begin position="19"/>
        <end position="100"/>
    </location>
</feature>
<feature type="chain" id="PRO_0000028461" description="Haptoglobin beta chain">
    <location>
        <begin position="102"/>
        <end position="346"/>
    </location>
</feature>
<feature type="domain" description="Sushi" evidence="6">
    <location>
        <begin position="31"/>
        <end position="87"/>
    </location>
</feature>
<feature type="domain" description="Peptidase S1" evidence="5">
    <location>
        <begin position="102"/>
        <end position="344"/>
    </location>
</feature>
<feature type="region of interest" description="Interaction with CD163" evidence="1">
    <location>
        <begin position="258"/>
        <end position="263"/>
    </location>
</feature>
<feature type="glycosylation site" description="N-linked (GlcNAc...) asparagine" evidence="4">
    <location>
        <position position="147"/>
    </location>
</feature>
<feature type="glycosylation site" description="N-linked (GlcNAc...) asparagine" evidence="4">
    <location>
        <position position="181"/>
    </location>
</feature>
<feature type="disulfide bond" description="Interchain" evidence="1">
    <location>
        <position position="33"/>
    </location>
</feature>
<feature type="disulfide bond" evidence="1">
    <location>
        <begin position="52"/>
        <end position="85"/>
    </location>
</feature>
<feature type="disulfide bond" description="Interchain (between alpha and beta chains)" evidence="5 6">
    <location>
        <begin position="89"/>
        <end position="206"/>
    </location>
</feature>
<feature type="disulfide bond" evidence="1">
    <location>
        <begin position="249"/>
        <end position="280"/>
    </location>
</feature>
<feature type="disulfide bond" evidence="1">
    <location>
        <begin position="291"/>
        <end position="321"/>
    </location>
</feature>
<evidence type="ECO:0000250" key="1"/>
<evidence type="ECO:0000250" key="2">
    <source>
        <dbReference type="UniProtKB" id="P00738"/>
    </source>
</evidence>
<evidence type="ECO:0000250" key="3">
    <source>
        <dbReference type="UniProtKB" id="Q8SPS7"/>
    </source>
</evidence>
<evidence type="ECO:0000255" key="4"/>
<evidence type="ECO:0000255" key="5">
    <source>
        <dbReference type="PROSITE-ProRule" id="PRU00274"/>
    </source>
</evidence>
<evidence type="ECO:0000255" key="6">
    <source>
        <dbReference type="PROSITE-ProRule" id="PRU00302"/>
    </source>
</evidence>
<evidence type="ECO:0000305" key="7"/>
<dbReference type="EMBL" id="AB006130">
    <property type="protein sequence ID" value="BAA21723.1"/>
    <property type="molecule type" value="mRNA"/>
</dbReference>
<dbReference type="RefSeq" id="NP_001268308.1">
    <property type="nucleotide sequence ID" value="NM_001281379.1"/>
</dbReference>
<dbReference type="SMR" id="O35086"/>
<dbReference type="STRING" id="10036.ENSMAUP00000021606"/>
<dbReference type="MEROPS" id="S01.972"/>
<dbReference type="GlyCosmos" id="O35086">
    <property type="glycosylation" value="2 sites, No reported glycans"/>
</dbReference>
<dbReference type="GeneID" id="101841186"/>
<dbReference type="KEGG" id="maua:101841186"/>
<dbReference type="CTD" id="3240"/>
<dbReference type="eggNOG" id="KOG3627">
    <property type="taxonomic scope" value="Eukaryota"/>
</dbReference>
<dbReference type="OrthoDB" id="6339452at2759"/>
<dbReference type="Proteomes" id="UP000189706">
    <property type="component" value="Unplaced"/>
</dbReference>
<dbReference type="GO" id="GO:0072562">
    <property type="term" value="C:blood microparticle"/>
    <property type="evidence" value="ECO:0007669"/>
    <property type="project" value="TreeGrafter"/>
</dbReference>
<dbReference type="GO" id="GO:0016209">
    <property type="term" value="F:antioxidant activity"/>
    <property type="evidence" value="ECO:0007669"/>
    <property type="project" value="UniProtKB-KW"/>
</dbReference>
<dbReference type="GO" id="GO:0030492">
    <property type="term" value="F:hemoglobin binding"/>
    <property type="evidence" value="ECO:0007669"/>
    <property type="project" value="UniProtKB-KW"/>
</dbReference>
<dbReference type="GO" id="GO:0006953">
    <property type="term" value="P:acute-phase response"/>
    <property type="evidence" value="ECO:0007669"/>
    <property type="project" value="UniProtKB-KW"/>
</dbReference>
<dbReference type="GO" id="GO:0042742">
    <property type="term" value="P:defense response to bacterium"/>
    <property type="evidence" value="ECO:0007669"/>
    <property type="project" value="UniProtKB-KW"/>
</dbReference>
<dbReference type="GO" id="GO:0002376">
    <property type="term" value="P:immune system process"/>
    <property type="evidence" value="ECO:0007669"/>
    <property type="project" value="UniProtKB-KW"/>
</dbReference>
<dbReference type="CDD" id="cd00033">
    <property type="entry name" value="CCP"/>
    <property type="match status" value="1"/>
</dbReference>
<dbReference type="CDD" id="cd00190">
    <property type="entry name" value="Tryp_SPc"/>
    <property type="match status" value="1"/>
</dbReference>
<dbReference type="FunFam" id="2.10.70.10:FF:000048">
    <property type="entry name" value="Haptoglobin"/>
    <property type="match status" value="1"/>
</dbReference>
<dbReference type="FunFam" id="2.40.10.10:FF:000027">
    <property type="entry name" value="Haptoglobin"/>
    <property type="match status" value="1"/>
</dbReference>
<dbReference type="FunFam" id="2.40.10.10:FF:000031">
    <property type="entry name" value="Haptoglobin"/>
    <property type="match status" value="1"/>
</dbReference>
<dbReference type="Gene3D" id="2.10.70.10">
    <property type="entry name" value="Complement Module, domain 1"/>
    <property type="match status" value="1"/>
</dbReference>
<dbReference type="Gene3D" id="2.40.10.10">
    <property type="entry name" value="Trypsin-like serine proteases"/>
    <property type="match status" value="2"/>
</dbReference>
<dbReference type="InterPro" id="IPR008292">
    <property type="entry name" value="Haptoglobin"/>
</dbReference>
<dbReference type="InterPro" id="IPR009003">
    <property type="entry name" value="Peptidase_S1_PA"/>
</dbReference>
<dbReference type="InterPro" id="IPR043504">
    <property type="entry name" value="Peptidase_S1_PA_chymotrypsin"/>
</dbReference>
<dbReference type="InterPro" id="IPR035976">
    <property type="entry name" value="Sushi/SCR/CCP_sf"/>
</dbReference>
<dbReference type="InterPro" id="IPR000436">
    <property type="entry name" value="Sushi_SCR_CCP_dom"/>
</dbReference>
<dbReference type="InterPro" id="IPR001254">
    <property type="entry name" value="Trypsin_dom"/>
</dbReference>
<dbReference type="PANTHER" id="PTHR24255">
    <property type="entry name" value="COMPLEMENT COMPONENT 1, S SUBCOMPONENT-RELATED"/>
    <property type="match status" value="1"/>
</dbReference>
<dbReference type="PANTHER" id="PTHR24255:SF27">
    <property type="entry name" value="HAPTOGLOBIN-RELATED PROTEIN"/>
    <property type="match status" value="1"/>
</dbReference>
<dbReference type="Pfam" id="PF00089">
    <property type="entry name" value="Trypsin"/>
    <property type="match status" value="1"/>
</dbReference>
<dbReference type="PIRSF" id="PIRSF001137">
    <property type="entry name" value="Haptoglobin"/>
    <property type="match status" value="1"/>
</dbReference>
<dbReference type="SMART" id="SM00020">
    <property type="entry name" value="Tryp_SPc"/>
    <property type="match status" value="1"/>
</dbReference>
<dbReference type="SUPFAM" id="SSF57535">
    <property type="entry name" value="Complement control module/SCR domain"/>
    <property type="match status" value="1"/>
</dbReference>
<dbReference type="SUPFAM" id="SSF50494">
    <property type="entry name" value="Trypsin-like serine proteases"/>
    <property type="match status" value="1"/>
</dbReference>
<dbReference type="PROSITE" id="PS50923">
    <property type="entry name" value="SUSHI"/>
    <property type="match status" value="1"/>
</dbReference>
<dbReference type="PROSITE" id="PS50240">
    <property type="entry name" value="TRYPSIN_DOM"/>
    <property type="match status" value="1"/>
</dbReference>
<organism>
    <name type="scientific">Mesocricetus auratus</name>
    <name type="common">Golden hamster</name>
    <dbReference type="NCBI Taxonomy" id="10036"/>
    <lineage>
        <taxon>Eukaryota</taxon>
        <taxon>Metazoa</taxon>
        <taxon>Chordata</taxon>
        <taxon>Craniata</taxon>
        <taxon>Vertebrata</taxon>
        <taxon>Euteleostomi</taxon>
        <taxon>Mammalia</taxon>
        <taxon>Eutheria</taxon>
        <taxon>Euarchontoglires</taxon>
        <taxon>Glires</taxon>
        <taxon>Rodentia</taxon>
        <taxon>Myomorpha</taxon>
        <taxon>Muroidea</taxon>
        <taxon>Cricetidae</taxon>
        <taxon>Cricetinae</taxon>
        <taxon>Mesocricetus</taxon>
    </lineage>
</organism>
<name>HPT_MESAU</name>
<reference key="1">
    <citation type="journal article" date="1998" name="Comp. Biochem. Physiol.">
        <title>Cloning and sequencing of cDNA encoding haptoglobin, an acute phase protein in Syrian hamster, Mesacricetus auratus.</title>
        <authorList>
            <person name="Yamamoto K."/>
            <person name="Matsui I."/>
            <person name="Nakatani T."/>
            <person name="Matsuura K."/>
            <person name="Sinohara H."/>
        </authorList>
    </citation>
    <scope>NUCLEOTIDE SEQUENCE [MRNA]</scope>
    <source>
        <tissue>Liver</tissue>
    </source>
</reference>
<protein>
    <recommendedName>
        <fullName>Haptoglobin</fullName>
    </recommendedName>
    <component>
        <recommendedName>
            <fullName>Haptoglobin alpha chain</fullName>
        </recommendedName>
    </component>
    <component>
        <recommendedName>
            <fullName>Haptoglobin beta chain</fullName>
        </recommendedName>
    </component>
</protein>